<comment type="function">
    <text evidence="1">Acyl-CoA binding protein which acts as the peroxisome receptor for pexophagy but is dispensable for aggrephagy and nonselective autophagy. Binds medium- and long-chain acyl-CoA esters (By similarity).</text>
</comment>
<comment type="subcellular location">
    <subcellularLocation>
        <location evidence="1">Peroxisome membrane</location>
        <topology evidence="1">Single-pass membrane protein</topology>
    </subcellularLocation>
</comment>
<comment type="alternative products">
    <event type="alternative splicing"/>
    <isoform>
        <id>Q5R7V3-1</id>
        <name>1</name>
        <sequence type="displayed"/>
    </isoform>
    <isoform>
        <id>Q5R7V3-2</id>
        <name>2</name>
        <sequence type="described" ref="VSP_025452 VSP_025453"/>
    </isoform>
</comment>
<comment type="similarity">
    <text evidence="8">Belongs to the ATG37 family.</text>
</comment>
<protein>
    <recommendedName>
        <fullName>Acyl-CoA-binding domain-containing protein 5</fullName>
    </recommendedName>
</protein>
<reference key="1">
    <citation type="submission" date="2004-11" db="EMBL/GenBank/DDBJ databases">
        <authorList>
            <consortium name="The German cDNA consortium"/>
        </authorList>
    </citation>
    <scope>NUCLEOTIDE SEQUENCE [LARGE SCALE MRNA] (ISOFORMS 1 AND 2)</scope>
    <source>
        <tissue>Brain cortex</tissue>
    </source>
</reference>
<name>ACBD5_PONAB</name>
<feature type="chain" id="PRO_0000287379" description="Acyl-CoA-binding domain-containing protein 5">
    <location>
        <begin position="1"/>
        <end position="525"/>
    </location>
</feature>
<feature type="transmembrane region" description="Helical" evidence="4">
    <location>
        <begin position="489"/>
        <end position="509"/>
    </location>
</feature>
<feature type="domain" description="ACB" evidence="5">
    <location>
        <begin position="43"/>
        <end position="132"/>
    </location>
</feature>
<feature type="region of interest" description="Disordered" evidence="6">
    <location>
        <begin position="157"/>
        <end position="216"/>
    </location>
</feature>
<feature type="region of interest" description="Disordered" evidence="6">
    <location>
        <begin position="367"/>
        <end position="433"/>
    </location>
</feature>
<feature type="coiled-coil region" evidence="4">
    <location>
        <begin position="181"/>
        <end position="210"/>
    </location>
</feature>
<feature type="coiled-coil region" evidence="4">
    <location>
        <begin position="438"/>
        <end position="467"/>
    </location>
</feature>
<feature type="compositionally biased region" description="Polar residues" evidence="6">
    <location>
        <begin position="158"/>
        <end position="177"/>
    </location>
</feature>
<feature type="compositionally biased region" description="Basic and acidic residues" evidence="6">
    <location>
        <begin position="198"/>
        <end position="216"/>
    </location>
</feature>
<feature type="compositionally biased region" description="Basic and acidic residues" evidence="6">
    <location>
        <begin position="367"/>
        <end position="376"/>
    </location>
</feature>
<feature type="compositionally biased region" description="Basic and acidic residues" evidence="6">
    <location>
        <begin position="422"/>
        <end position="432"/>
    </location>
</feature>
<feature type="binding site" evidence="1">
    <location>
        <begin position="54"/>
        <end position="63"/>
    </location>
    <ligand>
        <name>an acyl-CoA</name>
        <dbReference type="ChEBI" id="CHEBI:58342"/>
    </ligand>
</feature>
<feature type="binding site" evidence="1">
    <location>
        <begin position="74"/>
        <end position="78"/>
    </location>
    <ligand>
        <name>an acyl-CoA</name>
        <dbReference type="ChEBI" id="CHEBI:58342"/>
    </ligand>
</feature>
<feature type="binding site" evidence="1">
    <location>
        <position position="100"/>
    </location>
    <ligand>
        <name>an acyl-CoA</name>
        <dbReference type="ChEBI" id="CHEBI:58342"/>
    </ligand>
</feature>
<feature type="binding site" evidence="1">
    <location>
        <position position="119"/>
    </location>
    <ligand>
        <name>an acyl-CoA</name>
        <dbReference type="ChEBI" id="CHEBI:58342"/>
    </ligand>
</feature>
<feature type="modified residue" description="Phosphoserine" evidence="2">
    <location>
        <position position="184"/>
    </location>
</feature>
<feature type="modified residue" description="Phosphoserine" evidence="2">
    <location>
        <position position="185"/>
    </location>
</feature>
<feature type="modified residue" description="Phosphoserine" evidence="2">
    <location>
        <position position="187"/>
    </location>
</feature>
<feature type="modified residue" description="Phosphoserine" evidence="2">
    <location>
        <position position="191"/>
    </location>
</feature>
<feature type="modified residue" description="Phosphoserine" evidence="2">
    <location>
        <position position="206"/>
    </location>
</feature>
<feature type="modified residue" description="Phosphoserine" evidence="2">
    <location>
        <position position="270"/>
    </location>
</feature>
<feature type="modified residue" description="Phosphoserine" evidence="2">
    <location>
        <position position="304"/>
    </location>
</feature>
<feature type="modified residue" description="Phosphoserine" evidence="2">
    <location>
        <position position="419"/>
    </location>
</feature>
<feature type="modified residue" description="N6-acetyllysine" evidence="3">
    <location>
        <position position="460"/>
    </location>
</feature>
<feature type="splice variant" id="VSP_025452" description="In isoform 2." evidence="7">
    <location>
        <begin position="1"/>
        <end position="35"/>
    </location>
</feature>
<feature type="splice variant" id="VSP_025453" description="In isoform 2." evidence="7">
    <original>S</original>
    <variation>SVRLEKISKCLE</variation>
    <location>
        <position position="163"/>
    </location>
</feature>
<feature type="sequence conflict" description="In Ref. 1; CAH90619." evidence="8" ref="1">
    <original>S</original>
    <variation>I</variation>
    <location>
        <position position="117"/>
    </location>
</feature>
<feature type="sequence conflict" description="In Ref. 1; CAH90619." evidence="8" ref="1">
    <original>K</original>
    <variation>E</variation>
    <location>
        <position position="470"/>
    </location>
</feature>
<feature type="sequence conflict" description="In Ref. 1; CAH90619." evidence="8" ref="1">
    <original>R</original>
    <variation>Q</variation>
    <location>
        <position position="510"/>
    </location>
</feature>
<dbReference type="EMBL" id="CR860006">
    <property type="protein sequence ID" value="CAH92157.1"/>
    <property type="molecule type" value="mRNA"/>
</dbReference>
<dbReference type="EMBL" id="CR858392">
    <property type="protein sequence ID" value="CAH90619.1"/>
    <property type="molecule type" value="mRNA"/>
</dbReference>
<dbReference type="RefSeq" id="NP_001127310.1">
    <property type="nucleotide sequence ID" value="NM_001133838.1"/>
</dbReference>
<dbReference type="SMR" id="Q5R7V3"/>
<dbReference type="FunCoup" id="Q5R7V3">
    <property type="interactions" value="2316"/>
</dbReference>
<dbReference type="STRING" id="9601.ENSPPYP00000002523"/>
<dbReference type="GeneID" id="100174371"/>
<dbReference type="KEGG" id="pon:100174371"/>
<dbReference type="CTD" id="91452"/>
<dbReference type="eggNOG" id="KOG0817">
    <property type="taxonomic scope" value="Eukaryota"/>
</dbReference>
<dbReference type="InParanoid" id="Q5R7V3"/>
<dbReference type="OrthoDB" id="71307at2759"/>
<dbReference type="Proteomes" id="UP000001595">
    <property type="component" value="Unplaced"/>
</dbReference>
<dbReference type="GO" id="GO:0005778">
    <property type="term" value="C:peroxisomal membrane"/>
    <property type="evidence" value="ECO:0007669"/>
    <property type="project" value="UniProtKB-SubCell"/>
</dbReference>
<dbReference type="GO" id="GO:0000062">
    <property type="term" value="F:fatty-acyl-CoA binding"/>
    <property type="evidence" value="ECO:0007669"/>
    <property type="project" value="InterPro"/>
</dbReference>
<dbReference type="GO" id="GO:0006631">
    <property type="term" value="P:fatty acid metabolic process"/>
    <property type="evidence" value="ECO:0007669"/>
    <property type="project" value="TreeGrafter"/>
</dbReference>
<dbReference type="GO" id="GO:0000425">
    <property type="term" value="P:pexophagy"/>
    <property type="evidence" value="ECO:0007669"/>
    <property type="project" value="InterPro"/>
</dbReference>
<dbReference type="CDD" id="cd00435">
    <property type="entry name" value="ACBP"/>
    <property type="match status" value="1"/>
</dbReference>
<dbReference type="FunFam" id="1.20.80.10:FF:000010">
    <property type="entry name" value="Acyl-CoA-binding domain-containing protein 5"/>
    <property type="match status" value="1"/>
</dbReference>
<dbReference type="Gene3D" id="1.20.80.10">
    <property type="match status" value="1"/>
</dbReference>
<dbReference type="InterPro" id="IPR016347">
    <property type="entry name" value="ACBD5"/>
</dbReference>
<dbReference type="InterPro" id="IPR022408">
    <property type="entry name" value="Acyl-CoA-binding_prot_CS"/>
</dbReference>
<dbReference type="InterPro" id="IPR000582">
    <property type="entry name" value="Acyl-CoA-binding_protein"/>
</dbReference>
<dbReference type="InterPro" id="IPR035984">
    <property type="entry name" value="Acyl-CoA-binding_sf"/>
</dbReference>
<dbReference type="InterPro" id="IPR014352">
    <property type="entry name" value="FERM/acyl-CoA-bd_prot_sf"/>
</dbReference>
<dbReference type="PANTHER" id="PTHR23310:SF6">
    <property type="entry name" value="ACYL-COA-BINDING DOMAIN-CONTAINING PROTEIN 5"/>
    <property type="match status" value="1"/>
</dbReference>
<dbReference type="PANTHER" id="PTHR23310">
    <property type="entry name" value="ACYL-COA-BINDING PROTEIN, ACBP"/>
    <property type="match status" value="1"/>
</dbReference>
<dbReference type="Pfam" id="PF00887">
    <property type="entry name" value="ACBP"/>
    <property type="match status" value="1"/>
</dbReference>
<dbReference type="PIRSF" id="PIRSF002412">
    <property type="entry name" value="MA_DBI"/>
    <property type="match status" value="1"/>
</dbReference>
<dbReference type="PRINTS" id="PR00689">
    <property type="entry name" value="ACOABINDINGP"/>
</dbReference>
<dbReference type="SUPFAM" id="SSF47027">
    <property type="entry name" value="Acyl-CoA binding protein"/>
    <property type="match status" value="1"/>
</dbReference>
<dbReference type="PROSITE" id="PS00880">
    <property type="entry name" value="ACB_1"/>
    <property type="match status" value="1"/>
</dbReference>
<dbReference type="PROSITE" id="PS51228">
    <property type="entry name" value="ACB_2"/>
    <property type="match status" value="1"/>
</dbReference>
<accession>Q5R7V3</accession>
<accession>Q5RC88</accession>
<keyword id="KW-0007">Acetylation</keyword>
<keyword id="KW-0025">Alternative splicing</keyword>
<keyword id="KW-0072">Autophagy</keyword>
<keyword id="KW-0175">Coiled coil</keyword>
<keyword id="KW-0446">Lipid-binding</keyword>
<keyword id="KW-0472">Membrane</keyword>
<keyword id="KW-0576">Peroxisome</keyword>
<keyword id="KW-0597">Phosphoprotein</keyword>
<keyword id="KW-1185">Reference proteome</keyword>
<keyword id="KW-0812">Transmembrane</keyword>
<keyword id="KW-1133">Transmembrane helix</keyword>
<keyword id="KW-0813">Transport</keyword>
<sequence>MLFLSFHAGSWESWCCCCLIPADRPWDRGQHWQLEMADTRSVHETRFEAAVKVIQSLPKNGSFQPTNEMMLKFYSFYKQATEGPCKLSRPGFWDPIGRYKWDAWSSLGDMTKEEAMSAYVEEMKKIIETMPMTEKVEELLRVIGPFYEIVEDKKSGRSSDITSDLDNVLTSTPNAKTVNGKAESSDSGAESEEEEAQEEVKGAEQSDNDKKMMKKSADHKNLEVIVTNGYDKDGFVQDIQNDIHASSSLNGRSTEEVKPIEENLGQTGKSAVCIHQDINDDHVEDVAGIQHLTSDSDSEVYCDSMEQFGQEESLDSFTSNNGPFQYYLGGHSSQPVENSGFCEDVQVPPGNGNIGNMQVVAVEGKGEVKHGGEDGRNNSGAPHREKRGGESDEFSNVRRGRGHRMQYLSEGTKGRQVGSGGDGERWGSDRGSRGSLNEQIALVLMRLQEDMQNVLQRLQKLETLTALQAKSSTTTLQTTPQPTSQRPSWWPFEMSPGVLTFAIIWPFIARWLVYLYYQRRRRKLN</sequence>
<gene>
    <name type="primary">ACBD5</name>
</gene>
<evidence type="ECO:0000250" key="1"/>
<evidence type="ECO:0000250" key="2">
    <source>
        <dbReference type="UniProtKB" id="Q5T8D3"/>
    </source>
</evidence>
<evidence type="ECO:0000250" key="3">
    <source>
        <dbReference type="UniProtKB" id="Q5XG73"/>
    </source>
</evidence>
<evidence type="ECO:0000255" key="4"/>
<evidence type="ECO:0000255" key="5">
    <source>
        <dbReference type="PROSITE-ProRule" id="PRU00573"/>
    </source>
</evidence>
<evidence type="ECO:0000256" key="6">
    <source>
        <dbReference type="SAM" id="MobiDB-lite"/>
    </source>
</evidence>
<evidence type="ECO:0000303" key="7">
    <source ref="1"/>
</evidence>
<evidence type="ECO:0000305" key="8"/>
<organism>
    <name type="scientific">Pongo abelii</name>
    <name type="common">Sumatran orangutan</name>
    <name type="synonym">Pongo pygmaeus abelii</name>
    <dbReference type="NCBI Taxonomy" id="9601"/>
    <lineage>
        <taxon>Eukaryota</taxon>
        <taxon>Metazoa</taxon>
        <taxon>Chordata</taxon>
        <taxon>Craniata</taxon>
        <taxon>Vertebrata</taxon>
        <taxon>Euteleostomi</taxon>
        <taxon>Mammalia</taxon>
        <taxon>Eutheria</taxon>
        <taxon>Euarchontoglires</taxon>
        <taxon>Primates</taxon>
        <taxon>Haplorrhini</taxon>
        <taxon>Catarrhini</taxon>
        <taxon>Hominidae</taxon>
        <taxon>Pongo</taxon>
    </lineage>
</organism>
<proteinExistence type="evidence at transcript level"/>